<accession>Q8SPW9</accession>
<gene>
    <name type="primary">IFNG</name>
</gene>
<sequence>MKYTSYFLALLLCVLLGFSGSYGQGQFFREIENLKEYFNASNPDVAKGGPLFSEILKNWKDESDKKIIQSQIVSFYFKLFENLKDNQIIQRSMDIIKQDMFQKFLNGSSEKLEDFKKLIQIPVDDLQTQRKAINELIKVMNDLSPKSNLRKRKRSQNLFRGRRAST</sequence>
<keyword id="KW-0051">Antiviral defense</keyword>
<keyword id="KW-0202">Cytokine</keyword>
<keyword id="KW-0325">Glycoprotein</keyword>
<keyword id="KW-0341">Growth regulation</keyword>
<keyword id="KW-0873">Pyrrolidone carboxylic acid</keyword>
<keyword id="KW-0964">Secreted</keyword>
<keyword id="KW-0732">Signal</keyword>
<dbReference type="EMBL" id="AF484688">
    <property type="protein sequence ID" value="AAL88709.1"/>
    <property type="molecule type" value="mRNA"/>
</dbReference>
<dbReference type="SMR" id="Q8SPW9"/>
<dbReference type="GlyCosmos" id="Q8SPW9">
    <property type="glycosylation" value="2 sites, No reported glycans"/>
</dbReference>
<dbReference type="GO" id="GO:0005615">
    <property type="term" value="C:extracellular space"/>
    <property type="evidence" value="ECO:0007669"/>
    <property type="project" value="UniProtKB-KW"/>
</dbReference>
<dbReference type="GO" id="GO:0005125">
    <property type="term" value="F:cytokine activity"/>
    <property type="evidence" value="ECO:0007669"/>
    <property type="project" value="UniProtKB-KW"/>
</dbReference>
<dbReference type="GO" id="GO:0005133">
    <property type="term" value="F:type II interferon receptor binding"/>
    <property type="evidence" value="ECO:0007669"/>
    <property type="project" value="InterPro"/>
</dbReference>
<dbReference type="GO" id="GO:0002250">
    <property type="term" value="P:adaptive immune response"/>
    <property type="evidence" value="ECO:0007669"/>
    <property type="project" value="TreeGrafter"/>
</dbReference>
<dbReference type="GO" id="GO:0051607">
    <property type="term" value="P:defense response to virus"/>
    <property type="evidence" value="ECO:0007669"/>
    <property type="project" value="UniProtKB-KW"/>
</dbReference>
<dbReference type="GO" id="GO:0006959">
    <property type="term" value="P:humoral immune response"/>
    <property type="evidence" value="ECO:0007669"/>
    <property type="project" value="TreeGrafter"/>
</dbReference>
<dbReference type="GO" id="GO:0009891">
    <property type="term" value="P:positive regulation of biosynthetic process"/>
    <property type="evidence" value="ECO:0007669"/>
    <property type="project" value="UniProtKB-ARBA"/>
</dbReference>
<dbReference type="FunFam" id="1.20.1250.10:FF:000080">
    <property type="entry name" value="Interferon gamma"/>
    <property type="match status" value="1"/>
</dbReference>
<dbReference type="Gene3D" id="1.20.1250.10">
    <property type="match status" value="1"/>
</dbReference>
<dbReference type="InterPro" id="IPR009079">
    <property type="entry name" value="4_helix_cytokine-like_core"/>
</dbReference>
<dbReference type="InterPro" id="IPR002069">
    <property type="entry name" value="Interferon_gamma"/>
</dbReference>
<dbReference type="PANTHER" id="PTHR11419">
    <property type="entry name" value="INTERFERON GAMMA"/>
    <property type="match status" value="1"/>
</dbReference>
<dbReference type="PANTHER" id="PTHR11419:SF0">
    <property type="entry name" value="INTERFERON GAMMA"/>
    <property type="match status" value="1"/>
</dbReference>
<dbReference type="Pfam" id="PF00714">
    <property type="entry name" value="IFN-gamma"/>
    <property type="match status" value="1"/>
</dbReference>
<dbReference type="PIRSF" id="PIRSF001936">
    <property type="entry name" value="IFN-gamma"/>
    <property type="match status" value="1"/>
</dbReference>
<dbReference type="SUPFAM" id="SSF47266">
    <property type="entry name" value="4-helical cytokines"/>
    <property type="match status" value="1"/>
</dbReference>
<comment type="function">
    <text evidence="2 3">Type II interferon produced by immune cells such as T-cells and NK cells that plays crucial roles in antimicrobial, antiviral, and antitumor responses by activating effector immune cells and enhancing antigen presentation. Primarily signals through the JAK-STAT pathway after interaction with its receptor IFNGR1 to affect gene regulation. Upon IFNG binding, IFNGR1 intracellular domain opens out to allow association of downstream signaling components JAK2, JAK1 and STAT1, leading to STAT1 activation, nuclear translocation and transcription of IFNG-regulated genes. Many of the induced genes are transcription factors such as IRF1 that are able to further drive regulation of a next wave of transcription. Plays a role in class I antigen presentation pathway by inducing a replacement of catalytic proteasome subunits with immunoproteasome subunits. In turn, increases the quantity, quality, and repertoire of peptides for class I MHC loading. Increases the efficiency of peptide generation also by inducing the expression of activator PA28 that associates with the proteasome and alters its proteolytic cleavage preference. Up-regulates as well MHC II complexes on the cell surface by promoting expression of several key molecules such as cathepsins B/CTSB, H/CTSH, and L/CTSL (By similarity). Participates in the regulation of hematopoietic stem cells during development and under homeostatic conditions by affecting their development, quiescence, and differentiation (By similarity).</text>
</comment>
<comment type="subunit">
    <text evidence="2">Homodimer. Interacts with IFNGR1 (via extracellular domain); this interaction promotes IFNGR1 dimerization.</text>
</comment>
<comment type="subcellular location">
    <subcellularLocation>
        <location evidence="2">Secreted</location>
    </subcellularLocation>
</comment>
<comment type="tissue specificity">
    <text>Released primarily from activated T lymphocytes.</text>
</comment>
<comment type="similarity">
    <text evidence="5">Belongs to the type II (or gamma) interferon family.</text>
</comment>
<reference key="1">
    <citation type="submission" date="2002-02" db="EMBL/GenBank/DDBJ databases">
        <title>Full length cDNA of Indian water buffalo interferon gamma.</title>
        <authorList>
            <person name="Premraj A."/>
            <person name="Sreekumar E."/>
            <person name="Rasool T.J."/>
        </authorList>
    </citation>
    <scope>NUCLEOTIDE SEQUENCE [MRNA]</scope>
</reference>
<organism>
    <name type="scientific">Bubalus bubalis</name>
    <name type="common">Domestic water buffalo</name>
    <dbReference type="NCBI Taxonomy" id="89462"/>
    <lineage>
        <taxon>Eukaryota</taxon>
        <taxon>Metazoa</taxon>
        <taxon>Chordata</taxon>
        <taxon>Craniata</taxon>
        <taxon>Vertebrata</taxon>
        <taxon>Euteleostomi</taxon>
        <taxon>Mammalia</taxon>
        <taxon>Eutheria</taxon>
        <taxon>Laurasiatheria</taxon>
        <taxon>Artiodactyla</taxon>
        <taxon>Ruminantia</taxon>
        <taxon>Pecora</taxon>
        <taxon>Bovidae</taxon>
        <taxon>Bovinae</taxon>
        <taxon>Bubalus</taxon>
    </lineage>
</organism>
<protein>
    <recommendedName>
        <fullName>Interferon gamma</fullName>
        <shortName>IFN-gamma</shortName>
    </recommendedName>
</protein>
<name>IFNG_BUBBU</name>
<proteinExistence type="evidence at transcript level"/>
<evidence type="ECO:0000250" key="1"/>
<evidence type="ECO:0000250" key="2">
    <source>
        <dbReference type="UniProtKB" id="P01579"/>
    </source>
</evidence>
<evidence type="ECO:0000250" key="3">
    <source>
        <dbReference type="UniProtKB" id="P01580"/>
    </source>
</evidence>
<evidence type="ECO:0000255" key="4"/>
<evidence type="ECO:0000305" key="5"/>
<feature type="signal peptide" evidence="1">
    <location>
        <begin position="1"/>
        <end position="23"/>
    </location>
</feature>
<feature type="chain" id="PRO_0000016434" description="Interferon gamma">
    <location>
        <begin position="24"/>
        <end position="166"/>
    </location>
</feature>
<feature type="modified residue" description="Pyrrolidone carboxylic acid" evidence="2">
    <location>
        <position position="24"/>
    </location>
</feature>
<feature type="glycosylation site" description="N-linked (GlcNAc...) asparagine" evidence="4">
    <location>
        <position position="39"/>
    </location>
</feature>
<feature type="glycosylation site" description="N-linked (GlcNAc...) asparagine" evidence="4">
    <location>
        <position position="106"/>
    </location>
</feature>